<comment type="function">
    <text evidence="1">Involved in the assembly of lipopolysaccharide (LPS). Required for the translocation of LPS from the inner membrane to the outer membrane. Facilitates the transfer of LPS from the inner membrane to the periplasmic protein LptA. Could be a docking site for LptA.</text>
</comment>
<comment type="subunit">
    <text evidence="1">Component of the lipopolysaccharide transport and assembly complex. Interacts with LptA and the LptBFG transporter complex.</text>
</comment>
<comment type="subcellular location">
    <subcellularLocation>
        <location evidence="1">Cell inner membrane</location>
        <topology evidence="1">Single-pass membrane protein</topology>
    </subcellularLocation>
</comment>
<comment type="similarity">
    <text evidence="1">Belongs to the LptC family.</text>
</comment>
<keyword id="KW-0997">Cell inner membrane</keyword>
<keyword id="KW-1003">Cell membrane</keyword>
<keyword id="KW-0472">Membrane</keyword>
<keyword id="KW-1185">Reference proteome</keyword>
<keyword id="KW-0812">Transmembrane</keyword>
<keyword id="KW-1133">Transmembrane helix</keyword>
<feature type="chain" id="PRO_0000169472" description="Lipopolysaccharide export system protein LptC">
    <location>
        <begin position="1"/>
        <end position="191"/>
    </location>
</feature>
<feature type="transmembrane region" description="Helical" evidence="1">
    <location>
        <begin position="7"/>
        <end position="25"/>
    </location>
</feature>
<evidence type="ECO:0000255" key="1">
    <source>
        <dbReference type="HAMAP-Rule" id="MF_01915"/>
    </source>
</evidence>
<gene>
    <name evidence="1" type="primary">lptC</name>
    <name type="ordered locus">c3959</name>
</gene>
<reference key="1">
    <citation type="journal article" date="2002" name="Proc. Natl. Acad. Sci. U.S.A.">
        <title>Extensive mosaic structure revealed by the complete genome sequence of uropathogenic Escherichia coli.</title>
        <authorList>
            <person name="Welch R.A."/>
            <person name="Burland V."/>
            <person name="Plunkett G. III"/>
            <person name="Redford P."/>
            <person name="Roesch P."/>
            <person name="Rasko D."/>
            <person name="Buckles E.L."/>
            <person name="Liou S.-R."/>
            <person name="Boutin A."/>
            <person name="Hackett J."/>
            <person name="Stroud D."/>
            <person name="Mayhew G.F."/>
            <person name="Rose D.J."/>
            <person name="Zhou S."/>
            <person name="Schwartz D.C."/>
            <person name="Perna N.T."/>
            <person name="Mobley H.L.T."/>
            <person name="Donnenberg M.S."/>
            <person name="Blattner F.R."/>
        </authorList>
    </citation>
    <scope>NUCLEOTIDE SEQUENCE [LARGE SCALE GENOMIC DNA]</scope>
    <source>
        <strain>CFT073 / ATCC 700928 / UPEC</strain>
    </source>
</reference>
<proteinExistence type="inferred from homology"/>
<name>LPTC_ECOL6</name>
<organism>
    <name type="scientific">Escherichia coli O6:H1 (strain CFT073 / ATCC 700928 / UPEC)</name>
    <dbReference type="NCBI Taxonomy" id="199310"/>
    <lineage>
        <taxon>Bacteria</taxon>
        <taxon>Pseudomonadati</taxon>
        <taxon>Pseudomonadota</taxon>
        <taxon>Gammaproteobacteria</taxon>
        <taxon>Enterobacterales</taxon>
        <taxon>Enterobacteriaceae</taxon>
        <taxon>Escherichia</taxon>
    </lineage>
</organism>
<accession>P0ADW0</accession>
<accession>P45397</accession>
<sequence length="191" mass="21703">MSKARRWVIIVLSLAVLVMIGINMAEKDDTAQVVVNNNDPTYKSEHTDTLVYNPEGALSYRLIAQHVEYYSDQAVSWFTQPVLTTFDKDKIPTWSVKADKAKLTNDRMLYLYGHVEVNALVPDSQLRRITTDNAQINLVTQDVTSEDLVTLYGTTFNSSGLKMRGNLRSKNAELIEKVRTSYEIQNKQTQP</sequence>
<dbReference type="EMBL" id="AE014075">
    <property type="protein sequence ID" value="AAN82399.1"/>
    <property type="molecule type" value="Genomic_DNA"/>
</dbReference>
<dbReference type="RefSeq" id="WP_000030537.1">
    <property type="nucleotide sequence ID" value="NZ_CP051263.1"/>
</dbReference>
<dbReference type="SMR" id="P0ADW0"/>
<dbReference type="STRING" id="199310.c3959"/>
<dbReference type="TCDB" id="1.B.42.1.2">
    <property type="family name" value="the outer membrane lipopolysaccharide export porin (lps-ep) family"/>
</dbReference>
<dbReference type="GeneID" id="75206055"/>
<dbReference type="KEGG" id="ecc:c3959"/>
<dbReference type="eggNOG" id="COG3117">
    <property type="taxonomic scope" value="Bacteria"/>
</dbReference>
<dbReference type="HOGENOM" id="CLU_105814_2_1_6"/>
<dbReference type="BioCyc" id="ECOL199310:C3959-MONOMER"/>
<dbReference type="Proteomes" id="UP000001410">
    <property type="component" value="Chromosome"/>
</dbReference>
<dbReference type="GO" id="GO:0030288">
    <property type="term" value="C:outer membrane-bounded periplasmic space"/>
    <property type="evidence" value="ECO:0007669"/>
    <property type="project" value="TreeGrafter"/>
</dbReference>
<dbReference type="GO" id="GO:0005886">
    <property type="term" value="C:plasma membrane"/>
    <property type="evidence" value="ECO:0007669"/>
    <property type="project" value="UniProtKB-SubCell"/>
</dbReference>
<dbReference type="GO" id="GO:0017089">
    <property type="term" value="F:glycolipid transfer activity"/>
    <property type="evidence" value="ECO:0007669"/>
    <property type="project" value="TreeGrafter"/>
</dbReference>
<dbReference type="GO" id="GO:0015221">
    <property type="term" value="F:lipopolysaccharide transmembrane transporter activity"/>
    <property type="evidence" value="ECO:0007669"/>
    <property type="project" value="InterPro"/>
</dbReference>
<dbReference type="GO" id="GO:0043165">
    <property type="term" value="P:Gram-negative-bacterium-type cell outer membrane assembly"/>
    <property type="evidence" value="ECO:0007669"/>
    <property type="project" value="UniProtKB-UniRule"/>
</dbReference>
<dbReference type="FunFam" id="2.60.450.10:FF:000001">
    <property type="entry name" value="Lipopolysaccharide export system protein LptC"/>
    <property type="match status" value="1"/>
</dbReference>
<dbReference type="Gene3D" id="2.60.450.10">
    <property type="entry name" value="Lipopolysaccharide (LPS) transport protein A like domain"/>
    <property type="match status" value="1"/>
</dbReference>
<dbReference type="HAMAP" id="MF_01915">
    <property type="entry name" value="LPS_assembly_LptC"/>
    <property type="match status" value="1"/>
</dbReference>
<dbReference type="InterPro" id="IPR010664">
    <property type="entry name" value="LipoPS_assembly_LptC-rel"/>
</dbReference>
<dbReference type="InterPro" id="IPR052363">
    <property type="entry name" value="LPS_export_LptC"/>
</dbReference>
<dbReference type="InterPro" id="IPR026265">
    <property type="entry name" value="LptC"/>
</dbReference>
<dbReference type="NCBIfam" id="TIGR04409">
    <property type="entry name" value="LptC_YrbK"/>
    <property type="match status" value="1"/>
</dbReference>
<dbReference type="NCBIfam" id="NF008142">
    <property type="entry name" value="PRK10893.1"/>
    <property type="match status" value="1"/>
</dbReference>
<dbReference type="PANTHER" id="PTHR37481">
    <property type="entry name" value="LIPOPOLYSACCHARIDE EXPORT SYSTEM PROTEIN LPTC"/>
    <property type="match status" value="1"/>
</dbReference>
<dbReference type="PANTHER" id="PTHR37481:SF1">
    <property type="entry name" value="LIPOPOLYSACCHARIDE EXPORT SYSTEM PROTEIN LPTC"/>
    <property type="match status" value="1"/>
</dbReference>
<dbReference type="Pfam" id="PF06835">
    <property type="entry name" value="LptC"/>
    <property type="match status" value="1"/>
</dbReference>
<dbReference type="PIRSF" id="PIRSF028513">
    <property type="entry name" value="LptC"/>
    <property type="match status" value="1"/>
</dbReference>
<protein>
    <recommendedName>
        <fullName evidence="1">Lipopolysaccharide export system protein LptC</fullName>
    </recommendedName>
</protein>